<name>RL15_TROW8</name>
<reference key="1">
    <citation type="journal article" date="2003" name="Lancet">
        <title>Sequencing and analysis of the genome of the Whipple's disease bacterium Tropheryma whipplei.</title>
        <authorList>
            <person name="Bentley S.D."/>
            <person name="Maiwald M."/>
            <person name="Murphy L.D."/>
            <person name="Pallen M.J."/>
            <person name="Yeats C.A."/>
            <person name="Dover L.G."/>
            <person name="Norbertczak H.T."/>
            <person name="Besra G.S."/>
            <person name="Quail M.A."/>
            <person name="Harris D.E."/>
            <person name="von Herbay A."/>
            <person name="Goble A."/>
            <person name="Rutter S."/>
            <person name="Squares R."/>
            <person name="Squares S."/>
            <person name="Barrell B.G."/>
            <person name="Parkhill J."/>
            <person name="Relman D.A."/>
        </authorList>
    </citation>
    <scope>NUCLEOTIDE SEQUENCE [LARGE SCALE GENOMIC DNA]</scope>
    <source>
        <strain>TW08/27</strain>
    </source>
</reference>
<comment type="function">
    <text evidence="1">Binds to the 23S rRNA.</text>
</comment>
<comment type="subunit">
    <text evidence="1">Part of the 50S ribosomal subunit.</text>
</comment>
<comment type="similarity">
    <text evidence="1">Belongs to the universal ribosomal protein uL15 family.</text>
</comment>
<proteinExistence type="inferred from homology"/>
<gene>
    <name evidence="1" type="primary">rplO</name>
    <name type="ordered locus">TW224</name>
</gene>
<evidence type="ECO:0000255" key="1">
    <source>
        <dbReference type="HAMAP-Rule" id="MF_01341"/>
    </source>
</evidence>
<evidence type="ECO:0000256" key="2">
    <source>
        <dbReference type="SAM" id="MobiDB-lite"/>
    </source>
</evidence>
<evidence type="ECO:0000305" key="3"/>
<sequence>MRLIKLHHLRPAPGSRRARIRVGRGEGSKGKTAGRGTKGTKARAPVRPGFAGGQIPLHMSIPKLKGFKNHKKVEYSVISIKRLCEAYPSGGVVTRDNVMSVIGKKRGFVKLLSDGEVTVKFDITVDKASAAAVEKITSAAGTVTQAR</sequence>
<feature type="chain" id="PRO_0000251580" description="Large ribosomal subunit protein uL15">
    <location>
        <begin position="1"/>
        <end position="147"/>
    </location>
</feature>
<feature type="region of interest" description="Disordered" evidence="2">
    <location>
        <begin position="21"/>
        <end position="49"/>
    </location>
</feature>
<protein>
    <recommendedName>
        <fullName evidence="1">Large ribosomal subunit protein uL15</fullName>
    </recommendedName>
    <alternativeName>
        <fullName evidence="3">50S ribosomal protein L15</fullName>
    </alternativeName>
</protein>
<keyword id="KW-0687">Ribonucleoprotein</keyword>
<keyword id="KW-0689">Ribosomal protein</keyword>
<keyword id="KW-0694">RNA-binding</keyword>
<keyword id="KW-0699">rRNA-binding</keyword>
<accession>Q83I61</accession>
<dbReference type="EMBL" id="BX251410">
    <property type="protein sequence ID" value="CAD66901.1"/>
    <property type="molecule type" value="Genomic_DNA"/>
</dbReference>
<dbReference type="SMR" id="Q83I61"/>
<dbReference type="KEGG" id="tws:TW224"/>
<dbReference type="HOGENOM" id="CLU_055188_4_1_11"/>
<dbReference type="GO" id="GO:0022625">
    <property type="term" value="C:cytosolic large ribosomal subunit"/>
    <property type="evidence" value="ECO:0007669"/>
    <property type="project" value="TreeGrafter"/>
</dbReference>
<dbReference type="GO" id="GO:0019843">
    <property type="term" value="F:rRNA binding"/>
    <property type="evidence" value="ECO:0007669"/>
    <property type="project" value="UniProtKB-UniRule"/>
</dbReference>
<dbReference type="GO" id="GO:0003735">
    <property type="term" value="F:structural constituent of ribosome"/>
    <property type="evidence" value="ECO:0007669"/>
    <property type="project" value="InterPro"/>
</dbReference>
<dbReference type="GO" id="GO:0006412">
    <property type="term" value="P:translation"/>
    <property type="evidence" value="ECO:0007669"/>
    <property type="project" value="UniProtKB-UniRule"/>
</dbReference>
<dbReference type="Gene3D" id="3.100.10.10">
    <property type="match status" value="1"/>
</dbReference>
<dbReference type="HAMAP" id="MF_01341">
    <property type="entry name" value="Ribosomal_uL15"/>
    <property type="match status" value="1"/>
</dbReference>
<dbReference type="InterPro" id="IPR030878">
    <property type="entry name" value="Ribosomal_uL15"/>
</dbReference>
<dbReference type="InterPro" id="IPR021131">
    <property type="entry name" value="Ribosomal_uL15/eL18"/>
</dbReference>
<dbReference type="InterPro" id="IPR036227">
    <property type="entry name" value="Ribosomal_uL15/eL18_sf"/>
</dbReference>
<dbReference type="InterPro" id="IPR005749">
    <property type="entry name" value="Ribosomal_uL15_bac-type"/>
</dbReference>
<dbReference type="NCBIfam" id="TIGR01071">
    <property type="entry name" value="rplO_bact"/>
    <property type="match status" value="1"/>
</dbReference>
<dbReference type="PANTHER" id="PTHR12934">
    <property type="entry name" value="50S RIBOSOMAL PROTEIN L15"/>
    <property type="match status" value="1"/>
</dbReference>
<dbReference type="PANTHER" id="PTHR12934:SF11">
    <property type="entry name" value="LARGE RIBOSOMAL SUBUNIT PROTEIN UL15M"/>
    <property type="match status" value="1"/>
</dbReference>
<dbReference type="Pfam" id="PF00828">
    <property type="entry name" value="Ribosomal_L27A"/>
    <property type="match status" value="1"/>
</dbReference>
<dbReference type="SUPFAM" id="SSF52080">
    <property type="entry name" value="Ribosomal proteins L15p and L18e"/>
    <property type="match status" value="1"/>
</dbReference>
<organism>
    <name type="scientific">Tropheryma whipplei (strain TW08/27)</name>
    <name type="common">Whipple's bacillus</name>
    <dbReference type="NCBI Taxonomy" id="218496"/>
    <lineage>
        <taxon>Bacteria</taxon>
        <taxon>Bacillati</taxon>
        <taxon>Actinomycetota</taxon>
        <taxon>Actinomycetes</taxon>
        <taxon>Micrococcales</taxon>
        <taxon>Tropherymataceae</taxon>
        <taxon>Tropheryma</taxon>
    </lineage>
</organism>